<accession>A7ZXA4</accession>
<comment type="function">
    <text evidence="1">Catalyzes the hydrolysis of 4-amino-2-methyl-5-hydroxymethylpyrimidine pyrophosphate (HMP-PP) to 4-amino-2-methyl-5-hydroxymethylpyrimidine phosphate (HMP-P).</text>
</comment>
<comment type="catalytic activity">
    <reaction evidence="1">
        <text>4-amino-2-methyl-5-(diphosphooxymethyl)pyrimidine + H2O = 4-amino-2-methyl-5-(phosphooxymethyl)pyrimidine + phosphate + H(+)</text>
        <dbReference type="Rhea" id="RHEA:27914"/>
        <dbReference type="ChEBI" id="CHEBI:15377"/>
        <dbReference type="ChEBI" id="CHEBI:15378"/>
        <dbReference type="ChEBI" id="CHEBI:43474"/>
        <dbReference type="ChEBI" id="CHEBI:57841"/>
        <dbReference type="ChEBI" id="CHEBI:58354"/>
    </reaction>
</comment>
<comment type="cofactor">
    <cofactor evidence="1">
        <name>Mg(2+)</name>
        <dbReference type="ChEBI" id="CHEBI:18420"/>
    </cofactor>
</comment>
<comment type="similarity">
    <text evidence="1">Belongs to the HAD-like hydrolase superfamily. Cof family.</text>
</comment>
<evidence type="ECO:0000255" key="1">
    <source>
        <dbReference type="HAMAP-Rule" id="MF_01847"/>
    </source>
</evidence>
<proteinExistence type="inferred from homology"/>
<feature type="chain" id="PRO_0000342986" description="HMP-PP phosphatase">
    <location>
        <begin position="1"/>
        <end position="272"/>
    </location>
</feature>
<feature type="active site" description="Nucleophile" evidence="1">
    <location>
        <position position="8"/>
    </location>
</feature>
<feature type="binding site" evidence="1">
    <location>
        <position position="8"/>
    </location>
    <ligand>
        <name>Mg(2+)</name>
        <dbReference type="ChEBI" id="CHEBI:18420"/>
    </ligand>
</feature>
<feature type="binding site" evidence="1">
    <location>
        <position position="10"/>
    </location>
    <ligand>
        <name>Mg(2+)</name>
        <dbReference type="ChEBI" id="CHEBI:18420"/>
    </ligand>
</feature>
<feature type="binding site" evidence="1">
    <location>
        <position position="212"/>
    </location>
    <ligand>
        <name>Mg(2+)</name>
        <dbReference type="ChEBI" id="CHEBI:18420"/>
    </ligand>
</feature>
<protein>
    <recommendedName>
        <fullName evidence="1">HMP-PP phosphatase</fullName>
        <ecNumber evidence="1">3.6.1.-</ecNumber>
    </recommendedName>
</protein>
<sequence>MARLAAFDMDGTLLMPDHHLGEKTLSTLARLRERDITLTFATGRHALEMQHILGALSLDAYLITGNGTRVHSLEGELLHRDDLPADVAELVLYQQWDTRASMHIFNDDGWFTGKEIPALLQAFVYSGFRYQIIDVKKMPLGSVTKICFCGDHDDLTRLQIQLYEALGERAHLCFSATDCLEVLPVGCNKGAALTVLTQHLGLSLRDCMAFGDAMNDREMLGSVGSGFIMGNAMPQLRAELPHLPVIGHCRNQAVSHYLTHWLDYPHLPYSPE</sequence>
<reference key="1">
    <citation type="journal article" date="2008" name="J. Bacteriol.">
        <title>The pangenome structure of Escherichia coli: comparative genomic analysis of E. coli commensal and pathogenic isolates.</title>
        <authorList>
            <person name="Rasko D.A."/>
            <person name="Rosovitz M.J."/>
            <person name="Myers G.S.A."/>
            <person name="Mongodin E.F."/>
            <person name="Fricke W.F."/>
            <person name="Gajer P."/>
            <person name="Crabtree J."/>
            <person name="Sebaihia M."/>
            <person name="Thomson N.R."/>
            <person name="Chaudhuri R."/>
            <person name="Henderson I.R."/>
            <person name="Sperandio V."/>
            <person name="Ravel J."/>
        </authorList>
    </citation>
    <scope>NUCLEOTIDE SEQUENCE [LARGE SCALE GENOMIC DNA]</scope>
    <source>
        <strain>HS</strain>
    </source>
</reference>
<name>COF_ECOHS</name>
<gene>
    <name evidence="1" type="primary">cof</name>
    <name type="ordered locus">EcHS_A0523</name>
</gene>
<dbReference type="EC" id="3.6.1.-" evidence="1"/>
<dbReference type="EMBL" id="CP000802">
    <property type="protein sequence ID" value="ABV04908.1"/>
    <property type="molecule type" value="Genomic_DNA"/>
</dbReference>
<dbReference type="RefSeq" id="WP_000113027.1">
    <property type="nucleotide sequence ID" value="NC_009800.1"/>
</dbReference>
<dbReference type="SMR" id="A7ZXA4"/>
<dbReference type="GeneID" id="93777004"/>
<dbReference type="KEGG" id="ecx:EcHS_A0523"/>
<dbReference type="HOGENOM" id="CLU_044146_5_2_6"/>
<dbReference type="GO" id="GO:0002145">
    <property type="term" value="F:4-amino-5-hydroxymethyl-2-methylpyrimidine diphosphatase activity"/>
    <property type="evidence" value="ECO:0007669"/>
    <property type="project" value="RHEA"/>
</dbReference>
<dbReference type="GO" id="GO:0000287">
    <property type="term" value="F:magnesium ion binding"/>
    <property type="evidence" value="ECO:0000250"/>
    <property type="project" value="UniProtKB"/>
</dbReference>
<dbReference type="GO" id="GO:0016791">
    <property type="term" value="F:phosphatase activity"/>
    <property type="evidence" value="ECO:0000250"/>
    <property type="project" value="UniProtKB"/>
</dbReference>
<dbReference type="CDD" id="cd07516">
    <property type="entry name" value="HAD_Pase"/>
    <property type="match status" value="1"/>
</dbReference>
<dbReference type="FunFam" id="3.30.1240.10:FF:000002">
    <property type="entry name" value="HMP-PP phosphatase"/>
    <property type="match status" value="1"/>
</dbReference>
<dbReference type="Gene3D" id="3.30.1240.10">
    <property type="match status" value="1"/>
</dbReference>
<dbReference type="Gene3D" id="3.40.50.1000">
    <property type="entry name" value="HAD superfamily/HAD-like"/>
    <property type="match status" value="1"/>
</dbReference>
<dbReference type="HAMAP" id="MF_01847">
    <property type="entry name" value="HMP_PP_phosphat"/>
    <property type="match status" value="1"/>
</dbReference>
<dbReference type="InterPro" id="IPR000150">
    <property type="entry name" value="Cof"/>
</dbReference>
<dbReference type="InterPro" id="IPR036412">
    <property type="entry name" value="HAD-like_sf"/>
</dbReference>
<dbReference type="InterPro" id="IPR006379">
    <property type="entry name" value="HAD-SF_hydro_IIB"/>
</dbReference>
<dbReference type="InterPro" id="IPR023214">
    <property type="entry name" value="HAD_sf"/>
</dbReference>
<dbReference type="InterPro" id="IPR023938">
    <property type="entry name" value="HMP-PP_phosphatase"/>
</dbReference>
<dbReference type="NCBIfam" id="TIGR00099">
    <property type="entry name" value="Cof-subfamily"/>
    <property type="match status" value="1"/>
</dbReference>
<dbReference type="NCBIfam" id="TIGR01484">
    <property type="entry name" value="HAD-SF-IIB"/>
    <property type="match status" value="1"/>
</dbReference>
<dbReference type="NCBIfam" id="NF011705">
    <property type="entry name" value="PRK15126.1"/>
    <property type="match status" value="1"/>
</dbReference>
<dbReference type="PANTHER" id="PTHR47267">
    <property type="match status" value="1"/>
</dbReference>
<dbReference type="PANTHER" id="PTHR47267:SF2">
    <property type="entry name" value="HMP-PP PHOSPHATASE"/>
    <property type="match status" value="1"/>
</dbReference>
<dbReference type="Pfam" id="PF08282">
    <property type="entry name" value="Hydrolase_3"/>
    <property type="match status" value="1"/>
</dbReference>
<dbReference type="SFLD" id="SFLDG01140">
    <property type="entry name" value="C2.B:_Phosphomannomutase_and_P"/>
    <property type="match status" value="1"/>
</dbReference>
<dbReference type="SFLD" id="SFLDS00003">
    <property type="entry name" value="Haloacid_Dehalogenase"/>
    <property type="match status" value="1"/>
</dbReference>
<dbReference type="SUPFAM" id="SSF56784">
    <property type="entry name" value="HAD-like"/>
    <property type="match status" value="1"/>
</dbReference>
<dbReference type="PROSITE" id="PS01228">
    <property type="entry name" value="COF_1"/>
    <property type="match status" value="1"/>
</dbReference>
<dbReference type="PROSITE" id="PS01229">
    <property type="entry name" value="COF_2"/>
    <property type="match status" value="1"/>
</dbReference>
<keyword id="KW-0378">Hydrolase</keyword>
<keyword id="KW-0460">Magnesium</keyword>
<keyword id="KW-0479">Metal-binding</keyword>
<organism>
    <name type="scientific">Escherichia coli O9:H4 (strain HS)</name>
    <dbReference type="NCBI Taxonomy" id="331112"/>
    <lineage>
        <taxon>Bacteria</taxon>
        <taxon>Pseudomonadati</taxon>
        <taxon>Pseudomonadota</taxon>
        <taxon>Gammaproteobacteria</taxon>
        <taxon>Enterobacterales</taxon>
        <taxon>Enterobacteriaceae</taxon>
        <taxon>Escherichia</taxon>
    </lineage>
</organism>